<feature type="chain" id="PRO_0000166119" description="Retinal cone rhodopsin-sensitive cGMP 3',5'-cyclic phosphodiesterase subunit gamma">
    <location>
        <begin position="1"/>
        <end position="83"/>
    </location>
</feature>
<feature type="region of interest" description="Disordered" evidence="1">
    <location>
        <begin position="1"/>
        <end position="51"/>
    </location>
</feature>
<feature type="compositionally biased region" description="Polar residues" evidence="1">
    <location>
        <begin position="1"/>
        <end position="17"/>
    </location>
</feature>
<feature type="compositionally biased region" description="Basic residues" evidence="1">
    <location>
        <begin position="22"/>
        <end position="43"/>
    </location>
</feature>
<sequence>MSDNTVLAPPTSNQGPTTPRKGPPKFKQRQTRQFKSKPPKKGVKGFGDDIPGMEGLGTDITVICPWEAFSHLELHELAQFGII</sequence>
<gene>
    <name type="primary">PDE6H</name>
</gene>
<comment type="function">
    <text>Participates in processes of transmission and amplification of the visual signal. cGMP-PDEs are the effector molecules in G-protein-mediated phototransduction in vertebrate rods and cones.</text>
</comment>
<comment type="catalytic activity">
    <reaction>
        <text>3',5'-cyclic GMP + H2O = GMP + H(+)</text>
        <dbReference type="Rhea" id="RHEA:16957"/>
        <dbReference type="ChEBI" id="CHEBI:15377"/>
        <dbReference type="ChEBI" id="CHEBI:15378"/>
        <dbReference type="ChEBI" id="CHEBI:57746"/>
        <dbReference type="ChEBI" id="CHEBI:58115"/>
        <dbReference type="EC" id="3.1.4.35"/>
    </reaction>
</comment>
<comment type="subunit">
    <text>Tetramer composed of two catalytic chains (alpha and beta), and two inhibitory chains (gamma).</text>
</comment>
<comment type="domain">
    <text>The C-terminal region is important in conferring inhibition.</text>
</comment>
<comment type="similarity">
    <text evidence="2">Belongs to the rod/cone cGMP-PDE gamma subunit family.</text>
</comment>
<keyword id="KW-0140">cGMP</keyword>
<keyword id="KW-0378">Hydrolase</keyword>
<keyword id="KW-1185">Reference proteome</keyword>
<keyword id="KW-0716">Sensory transduction</keyword>
<keyword id="KW-0844">Vision</keyword>
<name>CNCG_BOVIN</name>
<organism>
    <name type="scientific">Bos taurus</name>
    <name type="common">Bovine</name>
    <dbReference type="NCBI Taxonomy" id="9913"/>
    <lineage>
        <taxon>Eukaryota</taxon>
        <taxon>Metazoa</taxon>
        <taxon>Chordata</taxon>
        <taxon>Craniata</taxon>
        <taxon>Vertebrata</taxon>
        <taxon>Euteleostomi</taxon>
        <taxon>Mammalia</taxon>
        <taxon>Eutheria</taxon>
        <taxon>Laurasiatheria</taxon>
        <taxon>Artiodactyla</taxon>
        <taxon>Ruminantia</taxon>
        <taxon>Pecora</taxon>
        <taxon>Bovidae</taxon>
        <taxon>Bovinae</taxon>
        <taxon>Bos</taxon>
    </lineage>
</organism>
<proteinExistence type="inferred from homology"/>
<reference key="1">
    <citation type="journal article" date="1990" name="J. Biol. Chem.">
        <title>A phosphodiesterase inhibitor specific to a subset of bovine retinal cones.</title>
        <authorList>
            <person name="Hamilton S.E."/>
            <person name="Hurley J.B."/>
        </authorList>
    </citation>
    <scope>NUCLEOTIDE SEQUENCE [MRNA]</scope>
</reference>
<evidence type="ECO:0000256" key="1">
    <source>
        <dbReference type="SAM" id="MobiDB-lite"/>
    </source>
</evidence>
<evidence type="ECO:0000305" key="2"/>
<dbReference type="EC" id="3.1.4.35"/>
<dbReference type="EMBL" id="J05578">
    <property type="protein sequence ID" value="AAA30689.1"/>
    <property type="molecule type" value="mRNA"/>
</dbReference>
<dbReference type="RefSeq" id="NP_776847.1">
    <property type="nucleotide sequence ID" value="NM_174422.2"/>
</dbReference>
<dbReference type="SMR" id="P22571"/>
<dbReference type="CORUM" id="P22571"/>
<dbReference type="FunCoup" id="P22571">
    <property type="interactions" value="5"/>
</dbReference>
<dbReference type="STRING" id="9913.ENSBTAP00000018123"/>
<dbReference type="BindingDB" id="P22571"/>
<dbReference type="ChEMBL" id="CHEMBL2096979"/>
<dbReference type="DrugCentral" id="P22571"/>
<dbReference type="PaxDb" id="9913-ENSBTAP00000018123"/>
<dbReference type="Ensembl" id="ENSBTAT00000018123.4">
    <property type="protein sequence ID" value="ENSBTAP00000018123.2"/>
    <property type="gene ID" value="ENSBTAG00000013635.4"/>
</dbReference>
<dbReference type="GeneID" id="281978"/>
<dbReference type="KEGG" id="bta:281978"/>
<dbReference type="CTD" id="5149"/>
<dbReference type="VEuPathDB" id="HostDB:ENSBTAG00000013635"/>
<dbReference type="VGNC" id="VGNC:32684">
    <property type="gene designation" value="PDE6H"/>
</dbReference>
<dbReference type="eggNOG" id="ENOG502S4P1">
    <property type="taxonomic scope" value="Eukaryota"/>
</dbReference>
<dbReference type="GeneTree" id="ENSGT00390000013260"/>
<dbReference type="HOGENOM" id="CLU_170469_0_0_1"/>
<dbReference type="InParanoid" id="P22571"/>
<dbReference type="OMA" id="FNVICPW"/>
<dbReference type="OrthoDB" id="8525078at2759"/>
<dbReference type="TreeFam" id="TF333297"/>
<dbReference type="PRO" id="PR:P22571"/>
<dbReference type="Proteomes" id="UP000009136">
    <property type="component" value="Chromosome 5"/>
</dbReference>
<dbReference type="Bgee" id="ENSBTAG00000013635">
    <property type="expression patterns" value="Expressed in retina and 17 other cell types or tissues"/>
</dbReference>
<dbReference type="GO" id="GO:0042622">
    <property type="term" value="C:photoreceptor outer segment membrane"/>
    <property type="evidence" value="ECO:0000318"/>
    <property type="project" value="GO_Central"/>
</dbReference>
<dbReference type="GO" id="GO:0047555">
    <property type="term" value="F:3',5'-cyclic-GMP phosphodiesterase activity"/>
    <property type="evidence" value="ECO:0007669"/>
    <property type="project" value="UniProtKB-EC"/>
</dbReference>
<dbReference type="GO" id="GO:0030553">
    <property type="term" value="F:cGMP binding"/>
    <property type="evidence" value="ECO:0007669"/>
    <property type="project" value="InterPro"/>
</dbReference>
<dbReference type="GO" id="GO:0045742">
    <property type="term" value="P:positive regulation of epidermal growth factor receptor signaling pathway"/>
    <property type="evidence" value="ECO:0000318"/>
    <property type="project" value="GO_Central"/>
</dbReference>
<dbReference type="GO" id="GO:0045745">
    <property type="term" value="P:positive regulation of G protein-coupled receptor signaling pathway"/>
    <property type="evidence" value="ECO:0000318"/>
    <property type="project" value="GO_Central"/>
</dbReference>
<dbReference type="GO" id="GO:0043410">
    <property type="term" value="P:positive regulation of MAPK cascade"/>
    <property type="evidence" value="ECO:0007669"/>
    <property type="project" value="Ensembl"/>
</dbReference>
<dbReference type="GO" id="GO:0007601">
    <property type="term" value="P:visual perception"/>
    <property type="evidence" value="ECO:0007669"/>
    <property type="project" value="UniProtKB-KW"/>
</dbReference>
<dbReference type="FunFam" id="4.10.1120.10:FF:000001">
    <property type="entry name" value="retinal rod rhodopsin-sensitive cGMP 3',5'-cyclic phosphodiesterase subunit gamma"/>
    <property type="match status" value="1"/>
</dbReference>
<dbReference type="Gene3D" id="4.10.1120.10">
    <property type="entry name" value="Retinal cGMP phosphodiesterase, gamma subunit"/>
    <property type="match status" value="1"/>
</dbReference>
<dbReference type="InterPro" id="IPR006952">
    <property type="entry name" value="PDE6_gamma"/>
</dbReference>
<dbReference type="InterPro" id="IPR037030">
    <property type="entry name" value="PDE6_gamma_sf"/>
</dbReference>
<dbReference type="PANTHER" id="PTHR12122">
    <property type="entry name" value="RETINAL CONE RHODOPSIN-SENSITIVE CGMP 3',5'-CYCLIC PHOSPHODIESTERASE GAMMA-SUBUNIT-RELATED"/>
    <property type="match status" value="1"/>
</dbReference>
<dbReference type="PANTHER" id="PTHR12122:SF5">
    <property type="entry name" value="RETINAL CONE RHODOPSIN-SENSITIVE CGMP 3',5'-CYCLIC PHOSPHODIESTERASE SUBUNIT GAMMA"/>
    <property type="match status" value="1"/>
</dbReference>
<dbReference type="Pfam" id="PF04868">
    <property type="entry name" value="PDE6_gamma"/>
    <property type="match status" value="1"/>
</dbReference>
<dbReference type="PIRSF" id="PIRSF000969">
    <property type="entry name" value="35-cGMP_Pdiase_g"/>
    <property type="match status" value="1"/>
</dbReference>
<accession>P22571</accession>
<protein>
    <recommendedName>
        <fullName>Retinal cone rhodopsin-sensitive cGMP 3',5'-cyclic phosphodiesterase subunit gamma</fullName>
        <shortName>GMP-PDE gamma</shortName>
        <ecNumber>3.1.4.35</ecNumber>
    </recommendedName>
</protein>